<name>ATP25_YARLI</name>
<proteinExistence type="inferred from homology"/>
<comment type="function">
    <text evidence="1">Probable mitochondrial mRNA stabilization factor.</text>
</comment>
<comment type="subcellular location">
    <subcellularLocation>
        <location evidence="1">Mitochondrion inner membrane</location>
        <topology evidence="1">Peripheral membrane protein</topology>
        <orientation evidence="1">Matrix side</orientation>
    </subcellularLocation>
</comment>
<comment type="similarity">
    <text evidence="4">Belongs to the ATP25 family.</text>
</comment>
<keyword id="KW-0472">Membrane</keyword>
<keyword id="KW-0496">Mitochondrion</keyword>
<keyword id="KW-0999">Mitochondrion inner membrane</keyword>
<keyword id="KW-1185">Reference proteome</keyword>
<keyword id="KW-0809">Transit peptide</keyword>
<dbReference type="EMBL" id="CR382131">
    <property type="protein sequence ID" value="CAG79005.1"/>
    <property type="molecule type" value="Genomic_DNA"/>
</dbReference>
<dbReference type="RefSeq" id="XP_503426.1">
    <property type="nucleotide sequence ID" value="XM_503426.1"/>
</dbReference>
<dbReference type="SMR" id="Q6C7D6"/>
<dbReference type="STRING" id="284591.Q6C7D6"/>
<dbReference type="EnsemblFungi" id="CAG79005">
    <property type="protein sequence ID" value="CAG79005"/>
    <property type="gene ID" value="YALI0_E01672g"/>
</dbReference>
<dbReference type="KEGG" id="yli:2912053"/>
<dbReference type="VEuPathDB" id="FungiDB:YALI0_E01672g"/>
<dbReference type="HOGENOM" id="CLU_418691_0_0_1"/>
<dbReference type="InParanoid" id="Q6C7D6"/>
<dbReference type="OrthoDB" id="117387at4891"/>
<dbReference type="Proteomes" id="UP000001300">
    <property type="component" value="Chromosome E"/>
</dbReference>
<dbReference type="GO" id="GO:0005743">
    <property type="term" value="C:mitochondrial inner membrane"/>
    <property type="evidence" value="ECO:0007669"/>
    <property type="project" value="UniProtKB-SubCell"/>
</dbReference>
<dbReference type="GO" id="GO:0005739">
    <property type="term" value="C:mitochondrion"/>
    <property type="evidence" value="ECO:0000318"/>
    <property type="project" value="GO_Central"/>
</dbReference>
<dbReference type="GO" id="GO:0140053">
    <property type="term" value="P:mitochondrial gene expression"/>
    <property type="evidence" value="ECO:0007669"/>
    <property type="project" value="InterPro"/>
</dbReference>
<dbReference type="GO" id="GO:0048255">
    <property type="term" value="P:mRNA stabilization"/>
    <property type="evidence" value="ECO:0000318"/>
    <property type="project" value="GO_Central"/>
</dbReference>
<dbReference type="Gene3D" id="3.30.460.10">
    <property type="entry name" value="Beta Polymerase, domain 2"/>
    <property type="match status" value="1"/>
</dbReference>
<dbReference type="InterPro" id="IPR040152">
    <property type="entry name" value="Atp25"/>
</dbReference>
<dbReference type="InterPro" id="IPR043519">
    <property type="entry name" value="NT_sf"/>
</dbReference>
<dbReference type="PANTHER" id="PTHR28087">
    <property type="entry name" value="ATPASE SYNTHESIS PROTEIN 25, MITOCHONDRIAL"/>
    <property type="match status" value="1"/>
</dbReference>
<dbReference type="PANTHER" id="PTHR28087:SF1">
    <property type="entry name" value="ATPASE SYNTHESIS PROTEIN 25, MITOCHONDRIAL"/>
    <property type="match status" value="1"/>
</dbReference>
<dbReference type="Pfam" id="PF02410">
    <property type="entry name" value="RsfS"/>
    <property type="match status" value="1"/>
</dbReference>
<dbReference type="SUPFAM" id="SSF81301">
    <property type="entry name" value="Nucleotidyltransferase"/>
    <property type="match status" value="1"/>
</dbReference>
<reference key="1">
    <citation type="journal article" date="2004" name="Nature">
        <title>Genome evolution in yeasts.</title>
        <authorList>
            <person name="Dujon B."/>
            <person name="Sherman D."/>
            <person name="Fischer G."/>
            <person name="Durrens P."/>
            <person name="Casaregola S."/>
            <person name="Lafontaine I."/>
            <person name="de Montigny J."/>
            <person name="Marck C."/>
            <person name="Neuveglise C."/>
            <person name="Talla E."/>
            <person name="Goffard N."/>
            <person name="Frangeul L."/>
            <person name="Aigle M."/>
            <person name="Anthouard V."/>
            <person name="Babour A."/>
            <person name="Barbe V."/>
            <person name="Barnay S."/>
            <person name="Blanchin S."/>
            <person name="Beckerich J.-M."/>
            <person name="Beyne E."/>
            <person name="Bleykasten C."/>
            <person name="Boisrame A."/>
            <person name="Boyer J."/>
            <person name="Cattolico L."/>
            <person name="Confanioleri F."/>
            <person name="de Daruvar A."/>
            <person name="Despons L."/>
            <person name="Fabre E."/>
            <person name="Fairhead C."/>
            <person name="Ferry-Dumazet H."/>
            <person name="Groppi A."/>
            <person name="Hantraye F."/>
            <person name="Hennequin C."/>
            <person name="Jauniaux N."/>
            <person name="Joyet P."/>
            <person name="Kachouri R."/>
            <person name="Kerrest A."/>
            <person name="Koszul R."/>
            <person name="Lemaire M."/>
            <person name="Lesur I."/>
            <person name="Ma L."/>
            <person name="Muller H."/>
            <person name="Nicaud J.-M."/>
            <person name="Nikolski M."/>
            <person name="Oztas S."/>
            <person name="Ozier-Kalogeropoulos O."/>
            <person name="Pellenz S."/>
            <person name="Potier S."/>
            <person name="Richard G.-F."/>
            <person name="Straub M.-L."/>
            <person name="Suleau A."/>
            <person name="Swennen D."/>
            <person name="Tekaia F."/>
            <person name="Wesolowski-Louvel M."/>
            <person name="Westhof E."/>
            <person name="Wirth B."/>
            <person name="Zeniou-Meyer M."/>
            <person name="Zivanovic Y."/>
            <person name="Bolotin-Fukuhara M."/>
            <person name="Thierry A."/>
            <person name="Bouchier C."/>
            <person name="Caudron B."/>
            <person name="Scarpelli C."/>
            <person name="Gaillardin C."/>
            <person name="Weissenbach J."/>
            <person name="Wincker P."/>
            <person name="Souciet J.-L."/>
        </authorList>
    </citation>
    <scope>NUCLEOTIDE SEQUENCE [LARGE SCALE GENOMIC DNA]</scope>
    <source>
        <strain>CLIB 122 / E 150</strain>
    </source>
</reference>
<gene>
    <name type="primary">ATP25</name>
    <name type="ordered locus">YALI0E01672g</name>
</gene>
<evidence type="ECO:0000250" key="1"/>
<evidence type="ECO:0000255" key="2"/>
<evidence type="ECO:0000256" key="3">
    <source>
        <dbReference type="SAM" id="MobiDB-lite"/>
    </source>
</evidence>
<evidence type="ECO:0000305" key="4"/>
<organism>
    <name type="scientific">Yarrowia lipolytica (strain CLIB 122 / E 150)</name>
    <name type="common">Yeast</name>
    <name type="synonym">Candida lipolytica</name>
    <dbReference type="NCBI Taxonomy" id="284591"/>
    <lineage>
        <taxon>Eukaryota</taxon>
        <taxon>Fungi</taxon>
        <taxon>Dikarya</taxon>
        <taxon>Ascomycota</taxon>
        <taxon>Saccharomycotina</taxon>
        <taxon>Dipodascomycetes</taxon>
        <taxon>Dipodascales</taxon>
        <taxon>Dipodascales incertae sedis</taxon>
        <taxon>Yarrowia</taxon>
    </lineage>
</organism>
<sequence length="655" mass="74021">MIRVFLRQGRVLRPSTLQYRLRHFSDDKKPTQGLDFRALNNEIGGERQDKSSVENDNTPVSQAINGDIIGASSTSSETPSKPWYLRDQPEVKEEPVNIDLGLPDGAMNDIAKQLARDAIYDIKYIPEQDILIGSGKSSRHIYKAGREVMGVLKHQHDVLPTAEGLFKKNAQRMSYRRMLKKARKQNLEFPDSEWVVIDSQMGFHVHIFTAEKRELVNLEDLYKFEMDEEEVEISPEDFAWAEKGQKNVIDGDEFLSGQHNSDPFLRSDSITGLPKKPSNNPFDGGIGSGQRRSLHTSAPAATTLAVDFDGGSAAAKDDESKSHPSIIPLFMYQKWATQGDKDQVLAKYDDLQPHANRKEIVLSAITNFLKLPTTGFNDVPQAVEELFEVFSPSDASNPEWKEAFKALVNAYALNHKCVPTQALVDYLVAQQASGAAVVNWQVSEIVRATIDSTQYEQVGVTSLKEWQRVVDAKIQIIKQLIESFGLVAPVRLLANDRFIRRVARSLTQRTSASFGLDLVAKPETTKHPLDLRLKLLEESLPIKMLNRKTLFVFFAAYANSYAWNPFFKLLKRCHKETKTDNAHVQTIISLVLNSRDETAYYRLMESELGLLCDAQGELPLDKDIAVKLEKLMDNIDPEGRRFQQLRHKTNTQLYS</sequence>
<feature type="transit peptide" description="Mitochondrion" evidence="2">
    <location>
        <begin position="1"/>
        <end position="24"/>
    </location>
</feature>
<feature type="chain" id="PRO_0000404491" description="ATPase synthesis protein 25, mitochondrial">
    <location>
        <begin position="25"/>
        <end position="655"/>
    </location>
</feature>
<feature type="region of interest" description="Disordered" evidence="3">
    <location>
        <begin position="44"/>
        <end position="83"/>
    </location>
</feature>
<feature type="region of interest" description="Disordered" evidence="3">
    <location>
        <begin position="265"/>
        <end position="296"/>
    </location>
</feature>
<feature type="compositionally biased region" description="Basic and acidic residues" evidence="3">
    <location>
        <begin position="44"/>
        <end position="53"/>
    </location>
</feature>
<feature type="compositionally biased region" description="Polar residues" evidence="3">
    <location>
        <begin position="54"/>
        <end position="64"/>
    </location>
</feature>
<protein>
    <recommendedName>
        <fullName>ATPase synthesis protein 25, mitochondrial</fullName>
    </recommendedName>
</protein>
<accession>Q6C7D6</accession>